<evidence type="ECO:0000250" key="1"/>
<evidence type="ECO:0000255" key="2"/>
<evidence type="ECO:0000305" key="3"/>
<comment type="function">
    <text evidence="1">Produced by lymphocytes activated by specific antigens or mitogens. IFN-gamma, in addition to having antiviral activity, has important immunoregulatory functions. It is a potent activator of macrophages, it has antiproliferative effects on transformed cells and it can potentiate the antiviral and antitumor effects of the type I interferons (By similarity).</text>
</comment>
<comment type="subunit">
    <text evidence="1">Homodimer.</text>
</comment>
<comment type="subcellular location">
    <subcellularLocation>
        <location evidence="1">Secreted</location>
    </subcellularLocation>
</comment>
<comment type="similarity">
    <text evidence="3">Belongs to the type II (or gamma) interferon family.</text>
</comment>
<feature type="signal peptide" evidence="2">
    <location>
        <begin position="1"/>
        <end position="19"/>
    </location>
</feature>
<feature type="chain" id="PRO_0000016464" description="Interferon gamma">
    <location>
        <begin position="20"/>
        <end position="164"/>
    </location>
</feature>
<feature type="glycosylation site" description="N-linked (GlcNAc...) asparagine" evidence="2">
    <location>
        <position position="42"/>
    </location>
</feature>
<feature type="glycosylation site" description="N-linked (GlcNAc...) asparagine" evidence="2">
    <location>
        <position position="61"/>
    </location>
</feature>
<keyword id="KW-0051">Antiviral defense</keyword>
<keyword id="KW-0202">Cytokine</keyword>
<keyword id="KW-0325">Glycoprotein</keyword>
<keyword id="KW-0341">Growth regulation</keyword>
<keyword id="KW-1185">Reference proteome</keyword>
<keyword id="KW-0964">Secreted</keyword>
<keyword id="KW-0732">Signal</keyword>
<accession>O57571</accession>
<name>IFNG_COTJA</name>
<organism>
    <name type="scientific">Coturnix japonica</name>
    <name type="common">Japanese quail</name>
    <name type="synonym">Coturnix coturnix japonica</name>
    <dbReference type="NCBI Taxonomy" id="93934"/>
    <lineage>
        <taxon>Eukaryota</taxon>
        <taxon>Metazoa</taxon>
        <taxon>Chordata</taxon>
        <taxon>Craniata</taxon>
        <taxon>Vertebrata</taxon>
        <taxon>Euteleostomi</taxon>
        <taxon>Archelosauria</taxon>
        <taxon>Archosauria</taxon>
        <taxon>Dinosauria</taxon>
        <taxon>Saurischia</taxon>
        <taxon>Theropoda</taxon>
        <taxon>Coelurosauria</taxon>
        <taxon>Aves</taxon>
        <taxon>Neognathae</taxon>
        <taxon>Galloanserae</taxon>
        <taxon>Galliformes</taxon>
        <taxon>Phasianidae</taxon>
        <taxon>Perdicinae</taxon>
        <taxon>Coturnix</taxon>
    </lineage>
</organism>
<protein>
    <recommendedName>
        <fullName>Interferon gamma</fullName>
        <shortName>IFN-gamma</shortName>
    </recommendedName>
</protein>
<proteinExistence type="inferred from homology"/>
<dbReference type="EMBL" id="AJ001678">
    <property type="protein sequence ID" value="CAA04918.1"/>
    <property type="molecule type" value="Genomic_DNA"/>
</dbReference>
<dbReference type="SMR" id="O57571"/>
<dbReference type="GlyCosmos" id="O57571">
    <property type="glycosylation" value="2 sites, No reported glycans"/>
</dbReference>
<dbReference type="Proteomes" id="UP000694412">
    <property type="component" value="Unplaced"/>
</dbReference>
<dbReference type="GO" id="GO:0005615">
    <property type="term" value="C:extracellular space"/>
    <property type="evidence" value="ECO:0000250"/>
    <property type="project" value="AgBase"/>
</dbReference>
<dbReference type="GO" id="GO:0005125">
    <property type="term" value="F:cytokine activity"/>
    <property type="evidence" value="ECO:0007669"/>
    <property type="project" value="UniProtKB-KW"/>
</dbReference>
<dbReference type="GO" id="GO:0005133">
    <property type="term" value="F:type II interferon receptor binding"/>
    <property type="evidence" value="ECO:0007669"/>
    <property type="project" value="InterPro"/>
</dbReference>
<dbReference type="GO" id="GO:0002250">
    <property type="term" value="P:adaptive immune response"/>
    <property type="evidence" value="ECO:0007669"/>
    <property type="project" value="TreeGrafter"/>
</dbReference>
<dbReference type="GO" id="GO:0051607">
    <property type="term" value="P:defense response to virus"/>
    <property type="evidence" value="ECO:0007669"/>
    <property type="project" value="UniProtKB-KW"/>
</dbReference>
<dbReference type="GO" id="GO:0006959">
    <property type="term" value="P:humoral immune response"/>
    <property type="evidence" value="ECO:0007669"/>
    <property type="project" value="TreeGrafter"/>
</dbReference>
<dbReference type="GO" id="GO:0042116">
    <property type="term" value="P:macrophage activation"/>
    <property type="evidence" value="ECO:0000250"/>
    <property type="project" value="AgBase"/>
</dbReference>
<dbReference type="GO" id="GO:0070673">
    <property type="term" value="P:response to interleukin-18"/>
    <property type="evidence" value="ECO:0000250"/>
    <property type="project" value="AgBase"/>
</dbReference>
<dbReference type="FunFam" id="1.20.1250.10:FF:000007">
    <property type="entry name" value="Interferon gamma"/>
    <property type="match status" value="1"/>
</dbReference>
<dbReference type="Gene3D" id="1.20.1250.10">
    <property type="match status" value="1"/>
</dbReference>
<dbReference type="InterPro" id="IPR009079">
    <property type="entry name" value="4_helix_cytokine-like_core"/>
</dbReference>
<dbReference type="InterPro" id="IPR002069">
    <property type="entry name" value="Interferon_gamma"/>
</dbReference>
<dbReference type="PANTHER" id="PTHR11419">
    <property type="entry name" value="INTERFERON GAMMA"/>
    <property type="match status" value="1"/>
</dbReference>
<dbReference type="PANTHER" id="PTHR11419:SF0">
    <property type="entry name" value="INTERFERON GAMMA"/>
    <property type="match status" value="1"/>
</dbReference>
<dbReference type="Pfam" id="PF00714">
    <property type="entry name" value="IFN-gamma"/>
    <property type="match status" value="1"/>
</dbReference>
<dbReference type="PIRSF" id="PIRSF001936">
    <property type="entry name" value="IFN-gamma"/>
    <property type="match status" value="1"/>
</dbReference>
<dbReference type="SUPFAM" id="SSF47266">
    <property type="entry name" value="4-helical cytokines"/>
    <property type="match status" value="1"/>
</dbReference>
<sequence length="164" mass="18898">MTCQTYNLFVLSVIMIYYGHTASSLNLVQLQDDIDKLKADFNSSHSDVADGGPIIVEKLKNWTERNEKRIILSQIVSMYLEMLENTDKSKPHIKHISEELYTLKNNLNDGTKKVKDIMDLAKLQMNDLRIHRKAANDLFSVLQKLVDPPSSKRKRSQCLRRCSC</sequence>
<gene>
    <name type="primary">IFNG</name>
</gene>
<reference key="1">
    <citation type="submission" date="1997-10" db="EMBL/GenBank/DDBJ databases">
        <title>Avian interferon-gamma: cloning, sequencing and comparison of interferon-gamma genes from several different avian species.</title>
        <authorList>
            <person name="Kaiser P."/>
            <person name="Sonnemans D."/>
            <person name="Smith L.M."/>
        </authorList>
    </citation>
    <scope>NUCLEOTIDE SEQUENCE [GENOMIC DNA]</scope>
</reference>